<protein>
    <recommendedName>
        <fullName>Probable ATP-binding protein YbiT</fullName>
    </recommendedName>
</protein>
<feature type="chain" id="PRO_0000093159" description="Probable ATP-binding protein YbiT">
    <location>
        <begin position="1"/>
        <end position="530"/>
    </location>
</feature>
<feature type="domain" description="ABC transporter 1" evidence="1">
    <location>
        <begin position="2"/>
        <end position="252"/>
    </location>
</feature>
<feature type="domain" description="ABC transporter 2" evidence="1">
    <location>
        <begin position="320"/>
        <end position="526"/>
    </location>
</feature>
<feature type="binding site" evidence="1">
    <location>
        <begin position="34"/>
        <end position="41"/>
    </location>
    <ligand>
        <name>ATP</name>
        <dbReference type="ChEBI" id="CHEBI:30616"/>
        <label>1</label>
    </ligand>
</feature>
<feature type="binding site" evidence="1">
    <location>
        <begin position="352"/>
        <end position="359"/>
    </location>
    <ligand>
        <name>ATP</name>
        <dbReference type="ChEBI" id="CHEBI:30616"/>
        <label>2</label>
    </ligand>
</feature>
<organism>
    <name type="scientific">Escherichia coli O157:H7</name>
    <dbReference type="NCBI Taxonomy" id="83334"/>
    <lineage>
        <taxon>Bacteria</taxon>
        <taxon>Pseudomonadati</taxon>
        <taxon>Pseudomonadota</taxon>
        <taxon>Gammaproteobacteria</taxon>
        <taxon>Enterobacterales</taxon>
        <taxon>Enterobacteriaceae</taxon>
        <taxon>Escherichia</taxon>
    </lineage>
</organism>
<sequence length="530" mass="59858">MLVSSNVTMQFGSKPLFENISVKFGGGNRYGLIGANGSGKSTFMKILGGDLEPTLGNVSLDPNERIGKLRQDQFAFEEFTVLDTVIMGHKELWEVKQERDRIYALPEMSEEDGYKVADLEVKYGEMDGYSAEARAGELLLGVGIPVEQHYGPMSEVAPGWKLRVLLAQALFADPDILLLDEPTNNLDIDTIRWLEQVLNERDSTMIIISHDRHFLNMVCTHMADLDYGELRVYPGNYDEYMTAATQARERLLADNAKKKAQIAELQSFVSRFSANASKSRQATSRARQIDKIKLEEVKASSRQNPFIRFEQDKKLFRNALEVEGLTKGFDNGPLFKNLNLLLEVGEKLAVLGTNGVGKSTLLKTLVGDLQPDSGTVKWSENARIGYYAQDHEYEFENDLTVFEWMSQWKQEGDDEQAVRSILGRLLFSQDDIKKPAKVLSGGEKGRMLFGKLMMQKPNILIMDEPTNHLDMESIESLNMALELYQGTLIFVSHDREFVSSLATRILEITPERVIDFSGNYEDYLRSKGIE</sequence>
<reference key="1">
    <citation type="journal article" date="2001" name="Nature">
        <title>Genome sequence of enterohaemorrhagic Escherichia coli O157:H7.</title>
        <authorList>
            <person name="Perna N.T."/>
            <person name="Plunkett G. III"/>
            <person name="Burland V."/>
            <person name="Mau B."/>
            <person name="Glasner J.D."/>
            <person name="Rose D.J."/>
            <person name="Mayhew G.F."/>
            <person name="Evans P.S."/>
            <person name="Gregor J."/>
            <person name="Kirkpatrick H.A."/>
            <person name="Posfai G."/>
            <person name="Hackett J."/>
            <person name="Klink S."/>
            <person name="Boutin A."/>
            <person name="Shao Y."/>
            <person name="Miller L."/>
            <person name="Grotbeck E.J."/>
            <person name="Davis N.W."/>
            <person name="Lim A."/>
            <person name="Dimalanta E.T."/>
            <person name="Potamousis K."/>
            <person name="Apodaca J."/>
            <person name="Anantharaman T.S."/>
            <person name="Lin J."/>
            <person name="Yen G."/>
            <person name="Schwartz D.C."/>
            <person name="Welch R.A."/>
            <person name="Blattner F.R."/>
        </authorList>
    </citation>
    <scope>NUCLEOTIDE SEQUENCE [LARGE SCALE GENOMIC DNA]</scope>
    <source>
        <strain>O157:H7 / EDL933 / ATCC 700927 / EHEC</strain>
    </source>
</reference>
<reference key="2">
    <citation type="journal article" date="2001" name="DNA Res.">
        <title>Complete genome sequence of enterohemorrhagic Escherichia coli O157:H7 and genomic comparison with a laboratory strain K-12.</title>
        <authorList>
            <person name="Hayashi T."/>
            <person name="Makino K."/>
            <person name="Ohnishi M."/>
            <person name="Kurokawa K."/>
            <person name="Ishii K."/>
            <person name="Yokoyama K."/>
            <person name="Han C.-G."/>
            <person name="Ohtsubo E."/>
            <person name="Nakayama K."/>
            <person name="Murata T."/>
            <person name="Tanaka M."/>
            <person name="Tobe T."/>
            <person name="Iida T."/>
            <person name="Takami H."/>
            <person name="Honda T."/>
            <person name="Sasakawa C."/>
            <person name="Ogasawara N."/>
            <person name="Yasunaga T."/>
            <person name="Kuhara S."/>
            <person name="Shiba T."/>
            <person name="Hattori M."/>
            <person name="Shinagawa H."/>
        </authorList>
    </citation>
    <scope>NUCLEOTIDE SEQUENCE [LARGE SCALE GENOMIC DNA]</scope>
    <source>
        <strain>O157:H7 / Sakai / RIMD 0509952 / EHEC</strain>
    </source>
</reference>
<dbReference type="EMBL" id="AE005174">
    <property type="protein sequence ID" value="AAG55192.1"/>
    <property type="molecule type" value="Genomic_DNA"/>
</dbReference>
<dbReference type="EMBL" id="BA000007">
    <property type="protein sequence ID" value="BAB34320.1"/>
    <property type="molecule type" value="Genomic_DNA"/>
</dbReference>
<dbReference type="PIR" id="A90741">
    <property type="entry name" value="A90741"/>
</dbReference>
<dbReference type="PIR" id="D85591">
    <property type="entry name" value="D85591"/>
</dbReference>
<dbReference type="RefSeq" id="NP_308924.1">
    <property type="nucleotide sequence ID" value="NC_002695.1"/>
</dbReference>
<dbReference type="RefSeq" id="WP_000961458.1">
    <property type="nucleotide sequence ID" value="NZ_VOAI01000006.1"/>
</dbReference>
<dbReference type="SMR" id="P0A9U5"/>
<dbReference type="STRING" id="155864.Z1042"/>
<dbReference type="GeneID" id="917637"/>
<dbReference type="KEGG" id="ece:Z1042"/>
<dbReference type="KEGG" id="ecs:ECs_0897"/>
<dbReference type="PATRIC" id="fig|386585.9.peg.1012"/>
<dbReference type="eggNOG" id="COG0488">
    <property type="taxonomic scope" value="Bacteria"/>
</dbReference>
<dbReference type="HOGENOM" id="CLU_000604_36_0_6"/>
<dbReference type="OMA" id="DWMGQWT"/>
<dbReference type="Proteomes" id="UP000000558">
    <property type="component" value="Chromosome"/>
</dbReference>
<dbReference type="Proteomes" id="UP000002519">
    <property type="component" value="Chromosome"/>
</dbReference>
<dbReference type="GO" id="GO:0005524">
    <property type="term" value="F:ATP binding"/>
    <property type="evidence" value="ECO:0007669"/>
    <property type="project" value="UniProtKB-KW"/>
</dbReference>
<dbReference type="GO" id="GO:0016887">
    <property type="term" value="F:ATP hydrolysis activity"/>
    <property type="evidence" value="ECO:0007669"/>
    <property type="project" value="InterPro"/>
</dbReference>
<dbReference type="CDD" id="cd03221">
    <property type="entry name" value="ABCF_EF-3"/>
    <property type="match status" value="2"/>
</dbReference>
<dbReference type="FunFam" id="3.40.50.300:FF:000011">
    <property type="entry name" value="Putative ABC transporter ATP-binding component"/>
    <property type="match status" value="1"/>
</dbReference>
<dbReference type="FunFam" id="3.40.50.300:FF:000070">
    <property type="entry name" value="Putative ABC transporter ATP-binding component"/>
    <property type="match status" value="1"/>
</dbReference>
<dbReference type="Gene3D" id="3.40.50.300">
    <property type="entry name" value="P-loop containing nucleotide triphosphate hydrolases"/>
    <property type="match status" value="2"/>
</dbReference>
<dbReference type="InterPro" id="IPR003593">
    <property type="entry name" value="AAA+_ATPase"/>
</dbReference>
<dbReference type="InterPro" id="IPR032781">
    <property type="entry name" value="ABC_tran_Xtn"/>
</dbReference>
<dbReference type="InterPro" id="IPR003439">
    <property type="entry name" value="ABC_transporter-like_ATP-bd"/>
</dbReference>
<dbReference type="InterPro" id="IPR050611">
    <property type="entry name" value="ABCF_EF3_subfamily"/>
</dbReference>
<dbReference type="InterPro" id="IPR027417">
    <property type="entry name" value="P-loop_NTPase"/>
</dbReference>
<dbReference type="NCBIfam" id="NF011646">
    <property type="entry name" value="PRK15064.1"/>
    <property type="match status" value="1"/>
</dbReference>
<dbReference type="PANTHER" id="PTHR19211:SF96">
    <property type="entry name" value="ATP-BINDING PROTEIN YBIT-RELATED"/>
    <property type="match status" value="1"/>
</dbReference>
<dbReference type="PANTHER" id="PTHR19211">
    <property type="entry name" value="ATP-BINDING TRANSPORT PROTEIN-RELATED"/>
    <property type="match status" value="1"/>
</dbReference>
<dbReference type="Pfam" id="PF00005">
    <property type="entry name" value="ABC_tran"/>
    <property type="match status" value="2"/>
</dbReference>
<dbReference type="Pfam" id="PF12848">
    <property type="entry name" value="ABC_tran_Xtn"/>
    <property type="match status" value="1"/>
</dbReference>
<dbReference type="SMART" id="SM00382">
    <property type="entry name" value="AAA"/>
    <property type="match status" value="2"/>
</dbReference>
<dbReference type="SUPFAM" id="SSF52540">
    <property type="entry name" value="P-loop containing nucleoside triphosphate hydrolases"/>
    <property type="match status" value="2"/>
</dbReference>
<dbReference type="PROSITE" id="PS50893">
    <property type="entry name" value="ABC_TRANSPORTER_2"/>
    <property type="match status" value="2"/>
</dbReference>
<comment type="similarity">
    <text evidence="2">Belongs to the ABC transporter superfamily. ABCF family. YbiT subfamily.</text>
</comment>
<keyword id="KW-0067">ATP-binding</keyword>
<keyword id="KW-0547">Nucleotide-binding</keyword>
<keyword id="KW-1185">Reference proteome</keyword>
<keyword id="KW-0677">Repeat</keyword>
<accession>P0A9U5</accession>
<accession>P75790</accession>
<proteinExistence type="inferred from homology"/>
<evidence type="ECO:0000255" key="1">
    <source>
        <dbReference type="PROSITE-ProRule" id="PRU00434"/>
    </source>
</evidence>
<evidence type="ECO:0000305" key="2"/>
<gene>
    <name type="primary">ybiT</name>
    <name type="ordered locus">Z1042</name>
    <name type="ordered locus">ECs0897</name>
</gene>
<name>YBIT_ECO57</name>